<organism evidence="9">
    <name type="scientific">Drosophila melanogaster</name>
    <name type="common">Fruit fly</name>
    <dbReference type="NCBI Taxonomy" id="7227"/>
    <lineage>
        <taxon>Eukaryota</taxon>
        <taxon>Metazoa</taxon>
        <taxon>Ecdysozoa</taxon>
        <taxon>Arthropoda</taxon>
        <taxon>Hexapoda</taxon>
        <taxon>Insecta</taxon>
        <taxon>Pterygota</taxon>
        <taxon>Neoptera</taxon>
        <taxon>Endopterygota</taxon>
        <taxon>Diptera</taxon>
        <taxon>Brachycera</taxon>
        <taxon>Muscomorpha</taxon>
        <taxon>Ephydroidea</taxon>
        <taxon>Drosophilidae</taxon>
        <taxon>Drosophila</taxon>
        <taxon>Sophophora</taxon>
    </lineage>
</organism>
<reference evidence="6" key="1">
    <citation type="submission" date="2000-01" db="EMBL/GenBank/DDBJ databases">
        <title>Characterization of Drosophila thioredoxin.</title>
        <authorList>
            <person name="Seong K."/>
            <person name="Horiuchi N."/>
            <person name="Aigaki T."/>
        </authorList>
    </citation>
    <scope>NUCLEOTIDE SEQUENCE [MRNA]</scope>
</reference>
<reference evidence="6" key="2">
    <citation type="journal article" date="2000" name="Science">
        <title>The genome sequence of Drosophila melanogaster.</title>
        <authorList>
            <person name="Adams M.D."/>
            <person name="Celniker S.E."/>
            <person name="Holt R.A."/>
            <person name="Evans C.A."/>
            <person name="Gocayne J.D."/>
            <person name="Amanatides P.G."/>
            <person name="Scherer S.E."/>
            <person name="Li P.W."/>
            <person name="Hoskins R.A."/>
            <person name="Galle R.F."/>
            <person name="George R.A."/>
            <person name="Lewis S.E."/>
            <person name="Richards S."/>
            <person name="Ashburner M."/>
            <person name="Henderson S.N."/>
            <person name="Sutton G.G."/>
            <person name="Wortman J.R."/>
            <person name="Yandell M.D."/>
            <person name="Zhang Q."/>
            <person name="Chen L.X."/>
            <person name="Brandon R.C."/>
            <person name="Rogers Y.-H.C."/>
            <person name="Blazej R.G."/>
            <person name="Champe M."/>
            <person name="Pfeiffer B.D."/>
            <person name="Wan K.H."/>
            <person name="Doyle C."/>
            <person name="Baxter E.G."/>
            <person name="Helt G."/>
            <person name="Nelson C.R."/>
            <person name="Miklos G.L.G."/>
            <person name="Abril J.F."/>
            <person name="Agbayani A."/>
            <person name="An H.-J."/>
            <person name="Andrews-Pfannkoch C."/>
            <person name="Baldwin D."/>
            <person name="Ballew R.M."/>
            <person name="Basu A."/>
            <person name="Baxendale J."/>
            <person name="Bayraktaroglu L."/>
            <person name="Beasley E.M."/>
            <person name="Beeson K.Y."/>
            <person name="Benos P.V."/>
            <person name="Berman B.P."/>
            <person name="Bhandari D."/>
            <person name="Bolshakov S."/>
            <person name="Borkova D."/>
            <person name="Botchan M.R."/>
            <person name="Bouck J."/>
            <person name="Brokstein P."/>
            <person name="Brottier P."/>
            <person name="Burtis K.C."/>
            <person name="Busam D.A."/>
            <person name="Butler H."/>
            <person name="Cadieu E."/>
            <person name="Center A."/>
            <person name="Chandra I."/>
            <person name="Cherry J.M."/>
            <person name="Cawley S."/>
            <person name="Dahlke C."/>
            <person name="Davenport L.B."/>
            <person name="Davies P."/>
            <person name="de Pablos B."/>
            <person name="Delcher A."/>
            <person name="Deng Z."/>
            <person name="Mays A.D."/>
            <person name="Dew I."/>
            <person name="Dietz S.M."/>
            <person name="Dodson K."/>
            <person name="Doup L.E."/>
            <person name="Downes M."/>
            <person name="Dugan-Rocha S."/>
            <person name="Dunkov B.C."/>
            <person name="Dunn P."/>
            <person name="Durbin K.J."/>
            <person name="Evangelista C.C."/>
            <person name="Ferraz C."/>
            <person name="Ferriera S."/>
            <person name="Fleischmann W."/>
            <person name="Fosler C."/>
            <person name="Gabrielian A.E."/>
            <person name="Garg N.S."/>
            <person name="Gelbart W.M."/>
            <person name="Glasser K."/>
            <person name="Glodek A."/>
            <person name="Gong F."/>
            <person name="Gorrell J.H."/>
            <person name="Gu Z."/>
            <person name="Guan P."/>
            <person name="Harris M."/>
            <person name="Harris N.L."/>
            <person name="Harvey D.A."/>
            <person name="Heiman T.J."/>
            <person name="Hernandez J.R."/>
            <person name="Houck J."/>
            <person name="Hostin D."/>
            <person name="Houston K.A."/>
            <person name="Howland T.J."/>
            <person name="Wei M.-H."/>
            <person name="Ibegwam C."/>
            <person name="Jalali M."/>
            <person name="Kalush F."/>
            <person name="Karpen G.H."/>
            <person name="Ke Z."/>
            <person name="Kennison J.A."/>
            <person name="Ketchum K.A."/>
            <person name="Kimmel B.E."/>
            <person name="Kodira C.D."/>
            <person name="Kraft C.L."/>
            <person name="Kravitz S."/>
            <person name="Kulp D."/>
            <person name="Lai Z."/>
            <person name="Lasko P."/>
            <person name="Lei Y."/>
            <person name="Levitsky A.A."/>
            <person name="Li J.H."/>
            <person name="Li Z."/>
            <person name="Liang Y."/>
            <person name="Lin X."/>
            <person name="Liu X."/>
            <person name="Mattei B."/>
            <person name="McIntosh T.C."/>
            <person name="McLeod M.P."/>
            <person name="McPherson D."/>
            <person name="Merkulov G."/>
            <person name="Milshina N.V."/>
            <person name="Mobarry C."/>
            <person name="Morris J."/>
            <person name="Moshrefi A."/>
            <person name="Mount S.M."/>
            <person name="Moy M."/>
            <person name="Murphy B."/>
            <person name="Murphy L."/>
            <person name="Muzny D.M."/>
            <person name="Nelson D.L."/>
            <person name="Nelson D.R."/>
            <person name="Nelson K.A."/>
            <person name="Nixon K."/>
            <person name="Nusskern D.R."/>
            <person name="Pacleb J.M."/>
            <person name="Palazzolo M."/>
            <person name="Pittman G.S."/>
            <person name="Pan S."/>
            <person name="Pollard J."/>
            <person name="Puri V."/>
            <person name="Reese M.G."/>
            <person name="Reinert K."/>
            <person name="Remington K."/>
            <person name="Saunders R.D.C."/>
            <person name="Scheeler F."/>
            <person name="Shen H."/>
            <person name="Shue B.C."/>
            <person name="Siden-Kiamos I."/>
            <person name="Simpson M."/>
            <person name="Skupski M.P."/>
            <person name="Smith T.J."/>
            <person name="Spier E."/>
            <person name="Spradling A.C."/>
            <person name="Stapleton M."/>
            <person name="Strong R."/>
            <person name="Sun E."/>
            <person name="Svirskas R."/>
            <person name="Tector C."/>
            <person name="Turner R."/>
            <person name="Venter E."/>
            <person name="Wang A.H."/>
            <person name="Wang X."/>
            <person name="Wang Z.-Y."/>
            <person name="Wassarman D.A."/>
            <person name="Weinstock G.M."/>
            <person name="Weissenbach J."/>
            <person name="Williams S.M."/>
            <person name="Woodage T."/>
            <person name="Worley K.C."/>
            <person name="Wu D."/>
            <person name="Yang S."/>
            <person name="Yao Q.A."/>
            <person name="Ye J."/>
            <person name="Yeh R.-F."/>
            <person name="Zaveri J.S."/>
            <person name="Zhan M."/>
            <person name="Zhang G."/>
            <person name="Zhao Q."/>
            <person name="Zheng L."/>
            <person name="Zheng X.H."/>
            <person name="Zhong F.N."/>
            <person name="Zhong W."/>
            <person name="Zhou X."/>
            <person name="Zhu S.C."/>
            <person name="Zhu X."/>
            <person name="Smith H.O."/>
            <person name="Gibbs R.A."/>
            <person name="Myers E.W."/>
            <person name="Rubin G.M."/>
            <person name="Venter J.C."/>
        </authorList>
    </citation>
    <scope>NUCLEOTIDE SEQUENCE [LARGE SCALE GENOMIC DNA]</scope>
    <source>
        <strain>Berkeley</strain>
    </source>
</reference>
<reference key="3">
    <citation type="journal article" date="2002" name="Genome Biol.">
        <title>Annotation of the Drosophila melanogaster euchromatic genome: a systematic review.</title>
        <authorList>
            <person name="Misra S."/>
            <person name="Crosby M.A."/>
            <person name="Mungall C.J."/>
            <person name="Matthews B.B."/>
            <person name="Campbell K.S."/>
            <person name="Hradecky P."/>
            <person name="Huang Y."/>
            <person name="Kaminker J.S."/>
            <person name="Millburn G.H."/>
            <person name="Prochnik S.E."/>
            <person name="Smith C.D."/>
            <person name="Tupy J.L."/>
            <person name="Whitfield E.J."/>
            <person name="Bayraktaroglu L."/>
            <person name="Berman B.P."/>
            <person name="Bettencourt B.R."/>
            <person name="Celniker S.E."/>
            <person name="de Grey A.D.N.J."/>
            <person name="Drysdale R.A."/>
            <person name="Harris N.L."/>
            <person name="Richter J."/>
            <person name="Russo S."/>
            <person name="Schroeder A.J."/>
            <person name="Shu S.Q."/>
            <person name="Stapleton M."/>
            <person name="Yamada C."/>
            <person name="Ashburner M."/>
            <person name="Gelbart W.M."/>
            <person name="Rubin G.M."/>
            <person name="Lewis S.E."/>
        </authorList>
    </citation>
    <scope>GENOME REANNOTATION</scope>
    <source>
        <strain>Berkeley</strain>
    </source>
</reference>
<reference key="4">
    <citation type="journal article" date="2002" name="Genome Biol.">
        <title>A Drosophila full-length cDNA resource.</title>
        <authorList>
            <person name="Stapleton M."/>
            <person name="Carlson J.W."/>
            <person name="Brokstein P."/>
            <person name="Yu C."/>
            <person name="Champe M."/>
            <person name="George R.A."/>
            <person name="Guarin H."/>
            <person name="Kronmiller B."/>
            <person name="Pacleb J.M."/>
            <person name="Park S."/>
            <person name="Wan K.H."/>
            <person name="Rubin G.M."/>
            <person name="Celniker S.E."/>
        </authorList>
    </citation>
    <scope>NUCLEOTIDE SEQUENCE [LARGE SCALE MRNA]</scope>
    <source>
        <strain>Berkeley</strain>
        <tissue>Embryo</tissue>
    </source>
</reference>
<reference evidence="7" key="5">
    <citation type="submission" date="2010-02" db="EMBL/GenBank/DDBJ databases">
        <authorList>
            <person name="Carlson J."/>
            <person name="Booth B."/>
            <person name="Frise E."/>
            <person name="Park S."/>
            <person name="Wan K."/>
            <person name="Yu C."/>
            <person name="Celniker S."/>
        </authorList>
    </citation>
    <scope>NUCLEOTIDE SEQUENCE [LARGE SCALE MRNA]</scope>
    <source>
        <strain evidence="7">Berkeley</strain>
        <tissue evidence="7">Embryo</tissue>
    </source>
</reference>
<reference evidence="6" key="6">
    <citation type="journal article" date="2002" name="J. Biol. Chem.">
        <title>Thioredoxin-2 but not thioredoxin-1 is a substrate of thioredoxin peroxidase-1 from Drosophila melanogaster: isolation and characterization of a second thioredoxin in D.melanogaster and evidence for distinct biological functions of Trx-1 and Trx-2.</title>
        <authorList>
            <person name="Bauer H."/>
            <person name="Kanzok S.M."/>
            <person name="Schirmer R.H."/>
        </authorList>
    </citation>
    <scope>FUNCTION</scope>
    <scope>DEVELOPMENTAL STAGE</scope>
</reference>
<reference key="7">
    <citation type="journal article" date="2005" name="J. Mol. Biol.">
        <title>Comparative structural analysis of oxidized and reduced thioredoxin from Drosophila melanogaster.</title>
        <authorList>
            <person name="Wahl M.C."/>
            <person name="Irmler A."/>
            <person name="Hecker B."/>
            <person name="Schirmer R.H."/>
            <person name="Becker K."/>
        </authorList>
    </citation>
    <scope>X-RAY CRYSTALLOGRAPHY (2.2 ANGSTROMS) OF 9-106</scope>
    <scope>SUBUNIT</scope>
    <scope>DISULFIDE BOND</scope>
</reference>
<protein>
    <recommendedName>
        <fullName evidence="8">Thioredoxin-2</fullName>
        <shortName>DmTrx-2</shortName>
    </recommendedName>
</protein>
<comment type="function">
    <text evidence="4">Participates in various redox reactions through the reversible oxidation of its active center dithiol to a disulfide and catalyzes dithiol-disulfide exchange reactions. As a reducing substrate of peroxiredoxin 1, thioredoxin 2 is preferred over thioredoxin 1.</text>
</comment>
<comment type="subunit">
    <text evidence="5">Monomer.</text>
</comment>
<comment type="developmental stage">
    <text evidence="4">Larval stages.</text>
</comment>
<comment type="similarity">
    <text evidence="6">Belongs to the thioredoxin family.</text>
</comment>
<comment type="sequence caution" evidence="6">
    <conflict type="miscellaneous discrepancy">
        <sequence resource="EMBL-CDS" id="AAL25497"/>
    </conflict>
    <text>Intron retention.</text>
</comment>
<proteinExistence type="evidence at protein level"/>
<feature type="chain" id="PRO_0000120034" description="Thioredoxin-2">
    <location>
        <begin position="1"/>
        <end position="106"/>
    </location>
</feature>
<feature type="domain" description="Thioredoxin" evidence="3">
    <location>
        <begin position="1"/>
        <end position="106"/>
    </location>
</feature>
<feature type="active site" description="Nucleophile" evidence="2">
    <location>
        <position position="32"/>
    </location>
</feature>
<feature type="active site" description="Nucleophile" evidence="2">
    <location>
        <position position="35"/>
    </location>
</feature>
<feature type="site" description="Deprotonates C-terminal active site Cys" evidence="1">
    <location>
        <position position="26"/>
    </location>
</feature>
<feature type="site" description="Contributes to redox potential value" evidence="1">
    <location>
        <position position="33"/>
    </location>
</feature>
<feature type="site" description="Contributes to redox potential value" evidence="1">
    <location>
        <position position="34"/>
    </location>
</feature>
<feature type="disulfide bond" description="Redox-active" evidence="3 5">
    <location>
        <begin position="32"/>
        <end position="35"/>
    </location>
</feature>
<feature type="strand" evidence="10">
    <location>
        <begin position="2"/>
        <end position="4"/>
    </location>
</feature>
<feature type="helix" evidence="10">
    <location>
        <begin position="8"/>
        <end position="18"/>
    </location>
</feature>
<feature type="strand" evidence="10">
    <location>
        <begin position="21"/>
        <end position="28"/>
    </location>
</feature>
<feature type="helix" evidence="10">
    <location>
        <begin position="33"/>
        <end position="48"/>
    </location>
</feature>
<feature type="turn" evidence="10">
    <location>
        <begin position="49"/>
        <end position="52"/>
    </location>
</feature>
<feature type="strand" evidence="10">
    <location>
        <begin position="53"/>
        <end position="59"/>
    </location>
</feature>
<feature type="turn" evidence="10">
    <location>
        <begin position="60"/>
        <end position="62"/>
    </location>
</feature>
<feature type="helix" evidence="10">
    <location>
        <begin position="64"/>
        <end position="69"/>
    </location>
</feature>
<feature type="strand" evidence="10">
    <location>
        <begin position="74"/>
        <end position="82"/>
    </location>
</feature>
<feature type="strand" evidence="10">
    <location>
        <begin position="85"/>
        <end position="92"/>
    </location>
</feature>
<feature type="helix" evidence="10">
    <location>
        <begin position="95"/>
        <end position="104"/>
    </location>
</feature>
<evidence type="ECO:0000250" key="1"/>
<evidence type="ECO:0000250" key="2">
    <source>
        <dbReference type="UniProtKB" id="Q9BRA2"/>
    </source>
</evidence>
<evidence type="ECO:0000255" key="3">
    <source>
        <dbReference type="PROSITE-ProRule" id="PRU00691"/>
    </source>
</evidence>
<evidence type="ECO:0000269" key="4">
    <source>
    </source>
</evidence>
<evidence type="ECO:0000269" key="5">
    <source>
    </source>
</evidence>
<evidence type="ECO:0000305" key="6"/>
<evidence type="ECO:0000312" key="7">
    <source>
        <dbReference type="EMBL" id="ADC54215.1"/>
    </source>
</evidence>
<evidence type="ECO:0000312" key="8">
    <source>
        <dbReference type="FlyBase" id="FBgn0040070"/>
    </source>
</evidence>
<evidence type="ECO:0000312" key="9">
    <source>
        <dbReference type="Proteomes" id="UP000000803"/>
    </source>
</evidence>
<evidence type="ECO:0007829" key="10">
    <source>
        <dbReference type="PDB" id="1XWA"/>
    </source>
</evidence>
<dbReference type="EMBL" id="AF220362">
    <property type="protein sequence ID" value="AAF37263.1"/>
    <property type="molecule type" value="mRNA"/>
</dbReference>
<dbReference type="EMBL" id="AE014134">
    <property type="protein sequence ID" value="AAN10700.1"/>
    <property type="molecule type" value="Genomic_DNA"/>
</dbReference>
<dbReference type="EMBL" id="AE014134">
    <property type="protein sequence ID" value="AAN10701.1"/>
    <property type="molecule type" value="Genomic_DNA"/>
</dbReference>
<dbReference type="EMBL" id="AY060458">
    <property type="protein sequence ID" value="AAL25497.1"/>
    <property type="status" value="ALT_SEQ"/>
    <property type="molecule type" value="mRNA"/>
</dbReference>
<dbReference type="EMBL" id="BT120324">
    <property type="protein sequence ID" value="ADC54215.1"/>
    <property type="molecule type" value="mRNA"/>
</dbReference>
<dbReference type="RefSeq" id="NP_523526.1">
    <property type="nucleotide sequence ID" value="NM_078802.4"/>
</dbReference>
<dbReference type="RefSeq" id="NP_723475.1">
    <property type="nucleotide sequence ID" value="NM_164863.3"/>
</dbReference>
<dbReference type="PDB" id="1XW9">
    <property type="method" value="X-ray"/>
    <property type="resolution" value="2.30 A"/>
    <property type="chains" value="A/B/C/D=9-106"/>
</dbReference>
<dbReference type="PDB" id="1XWA">
    <property type="method" value="X-ray"/>
    <property type="resolution" value="2.20 A"/>
    <property type="chains" value="A/B/C/D=1-106"/>
</dbReference>
<dbReference type="PDB" id="1XWB">
    <property type="method" value="X-ray"/>
    <property type="resolution" value="2.20 A"/>
    <property type="chains" value="A/B/C/D=9-106"/>
</dbReference>
<dbReference type="PDB" id="1XWC">
    <property type="method" value="X-ray"/>
    <property type="resolution" value="2.30 A"/>
    <property type="chains" value="A=9-106"/>
</dbReference>
<dbReference type="PDBsum" id="1XW9"/>
<dbReference type="PDBsum" id="1XWA"/>
<dbReference type="PDBsum" id="1XWB"/>
<dbReference type="PDBsum" id="1XWC"/>
<dbReference type="SMR" id="Q9V429"/>
<dbReference type="BioGRID" id="60380">
    <property type="interactions" value="61"/>
</dbReference>
<dbReference type="FunCoup" id="Q9V429">
    <property type="interactions" value="1051"/>
</dbReference>
<dbReference type="IntAct" id="Q9V429">
    <property type="interactions" value="148"/>
</dbReference>
<dbReference type="STRING" id="7227.FBpp0079436"/>
<dbReference type="PaxDb" id="7227-FBpp0079436"/>
<dbReference type="PeptideAtlas" id="Q9V429"/>
<dbReference type="DNASU" id="34281"/>
<dbReference type="EnsemblMetazoa" id="FBtr0079839">
    <property type="protein sequence ID" value="FBpp0079436"/>
    <property type="gene ID" value="FBgn0040070"/>
</dbReference>
<dbReference type="EnsemblMetazoa" id="FBtr0079840">
    <property type="protein sequence ID" value="FBpp0079437"/>
    <property type="gene ID" value="FBgn0040070"/>
</dbReference>
<dbReference type="GeneID" id="34281"/>
<dbReference type="KEGG" id="dme:Dmel_CG31884"/>
<dbReference type="UCSC" id="CG31884-RA">
    <property type="organism name" value="d. melanogaster"/>
</dbReference>
<dbReference type="AGR" id="FB:FBgn0040070"/>
<dbReference type="CTD" id="34281"/>
<dbReference type="FlyBase" id="FBgn0040070">
    <property type="gene designation" value="Trx2"/>
</dbReference>
<dbReference type="VEuPathDB" id="VectorBase:FBgn0040070"/>
<dbReference type="eggNOG" id="KOG0907">
    <property type="taxonomic scope" value="Eukaryota"/>
</dbReference>
<dbReference type="GeneTree" id="ENSGT00940000163988"/>
<dbReference type="HOGENOM" id="CLU_090389_14_4_1"/>
<dbReference type="InParanoid" id="Q9V429"/>
<dbReference type="OMA" id="HIHYVTD"/>
<dbReference type="OrthoDB" id="2121326at2759"/>
<dbReference type="PhylomeDB" id="Q9V429"/>
<dbReference type="Reactome" id="R-DME-2559580">
    <property type="pathway name" value="Oxidative Stress Induced Senescence"/>
</dbReference>
<dbReference type="Reactome" id="R-DME-3299685">
    <property type="pathway name" value="Detoxification of Reactive Oxygen Species"/>
</dbReference>
<dbReference type="Reactome" id="R-DME-499943">
    <property type="pathway name" value="Interconversion of nucleotide di- and triphosphates"/>
</dbReference>
<dbReference type="Reactome" id="R-DME-5628897">
    <property type="pathway name" value="TP53 Regulates Metabolic Genes"/>
</dbReference>
<dbReference type="Reactome" id="R-DME-5676934">
    <property type="pathway name" value="Protein repair"/>
</dbReference>
<dbReference type="Reactome" id="R-DME-844456">
    <property type="pathway name" value="The NLRP3 inflammasome"/>
</dbReference>
<dbReference type="BioGRID-ORCS" id="34281">
    <property type="hits" value="0 hits in 3 CRISPR screens"/>
</dbReference>
<dbReference type="EvolutionaryTrace" id="Q9V429"/>
<dbReference type="GenomeRNAi" id="34281"/>
<dbReference type="PRO" id="PR:Q9V429"/>
<dbReference type="Proteomes" id="UP000000803">
    <property type="component" value="Chromosome 2L"/>
</dbReference>
<dbReference type="Bgee" id="FBgn0040070">
    <property type="expression patterns" value="Expressed in adult anterior midgut class II enteroendocrine cell in adult midgut (Drosophila) and 271 other cell types or tissues"/>
</dbReference>
<dbReference type="GO" id="GO:0005829">
    <property type="term" value="C:cytosol"/>
    <property type="evidence" value="ECO:0000255"/>
    <property type="project" value="FlyBase"/>
</dbReference>
<dbReference type="GO" id="GO:0005634">
    <property type="term" value="C:nucleus"/>
    <property type="evidence" value="ECO:0000314"/>
    <property type="project" value="FlyBase"/>
</dbReference>
<dbReference type="GO" id="GO:0015036">
    <property type="term" value="F:disulfide oxidoreductase activity"/>
    <property type="evidence" value="ECO:0000314"/>
    <property type="project" value="UniProtKB"/>
</dbReference>
<dbReference type="GO" id="GO:0015038">
    <property type="term" value="F:glutathione disulfide oxidoreductase activity"/>
    <property type="evidence" value="ECO:0000314"/>
    <property type="project" value="FlyBase"/>
</dbReference>
<dbReference type="GO" id="GO:0015035">
    <property type="term" value="F:protein-disulfide reductase activity"/>
    <property type="evidence" value="ECO:0007669"/>
    <property type="project" value="InterPro"/>
</dbReference>
<dbReference type="GO" id="GO:0045454">
    <property type="term" value="P:cell redox homeostasis"/>
    <property type="evidence" value="ECO:0000314"/>
    <property type="project" value="UniProtKB"/>
</dbReference>
<dbReference type="GO" id="GO:0008340">
    <property type="term" value="P:determination of adult lifespan"/>
    <property type="evidence" value="ECO:0000315"/>
    <property type="project" value="FlyBase"/>
</dbReference>
<dbReference type="GO" id="GO:0006979">
    <property type="term" value="P:response to oxidative stress"/>
    <property type="evidence" value="ECO:0000315"/>
    <property type="project" value="FlyBase"/>
</dbReference>
<dbReference type="CDD" id="cd02947">
    <property type="entry name" value="TRX_family"/>
    <property type="match status" value="1"/>
</dbReference>
<dbReference type="FunFam" id="3.40.30.10:FF:000104">
    <property type="entry name" value="Thioredoxin"/>
    <property type="match status" value="1"/>
</dbReference>
<dbReference type="Gene3D" id="3.40.30.10">
    <property type="entry name" value="Glutaredoxin"/>
    <property type="match status" value="1"/>
</dbReference>
<dbReference type="InterPro" id="IPR005746">
    <property type="entry name" value="Thioredoxin"/>
</dbReference>
<dbReference type="InterPro" id="IPR036249">
    <property type="entry name" value="Thioredoxin-like_sf"/>
</dbReference>
<dbReference type="InterPro" id="IPR017937">
    <property type="entry name" value="Thioredoxin_CS"/>
</dbReference>
<dbReference type="InterPro" id="IPR013766">
    <property type="entry name" value="Thioredoxin_domain"/>
</dbReference>
<dbReference type="NCBIfam" id="TIGR01068">
    <property type="entry name" value="thioredoxin"/>
    <property type="match status" value="1"/>
</dbReference>
<dbReference type="PANTHER" id="PTHR46115">
    <property type="entry name" value="THIOREDOXIN-LIKE PROTEIN 1"/>
    <property type="match status" value="1"/>
</dbReference>
<dbReference type="Pfam" id="PF00085">
    <property type="entry name" value="Thioredoxin"/>
    <property type="match status" value="1"/>
</dbReference>
<dbReference type="PIRSF" id="PIRSF000077">
    <property type="entry name" value="Thioredoxin"/>
    <property type="match status" value="1"/>
</dbReference>
<dbReference type="PRINTS" id="PR00421">
    <property type="entry name" value="THIOREDOXIN"/>
</dbReference>
<dbReference type="SUPFAM" id="SSF52833">
    <property type="entry name" value="Thioredoxin-like"/>
    <property type="match status" value="1"/>
</dbReference>
<dbReference type="PROSITE" id="PS00194">
    <property type="entry name" value="THIOREDOXIN_1"/>
    <property type="match status" value="1"/>
</dbReference>
<dbReference type="PROSITE" id="PS51352">
    <property type="entry name" value="THIOREDOXIN_2"/>
    <property type="match status" value="1"/>
</dbReference>
<keyword id="KW-0002">3D-structure</keyword>
<keyword id="KW-1015">Disulfide bond</keyword>
<keyword id="KW-0249">Electron transport</keyword>
<keyword id="KW-0676">Redox-active center</keyword>
<keyword id="KW-1185">Reference proteome</keyword>
<keyword id="KW-0813">Transport</keyword>
<gene>
    <name evidence="8" type="primary">Trx2</name>
    <name evidence="8" type="ORF">CG31884</name>
</gene>
<sequence>MVYQVKDKADLDGQLTKASGKLVVLDFFATWCGPCKMISPKLVELSTQFADNVVVLKVDVDECEDIAMEYNISSMPTFVFLKNGVKVEEFAGANAKRLEDVIKANI</sequence>
<accession>Q9V429</accession>
<accession>A4V0H9</accession>
<accession>D3DMZ9</accession>
<accession>Q95SW4</accession>
<name>THIO2_DROME</name>